<proteinExistence type="evidence at protein level"/>
<reference key="1">
    <citation type="journal article" date="2004" name="Nat. Genet.">
        <title>Complete sequencing and characterization of 21,243 full-length human cDNAs.</title>
        <authorList>
            <person name="Ota T."/>
            <person name="Suzuki Y."/>
            <person name="Nishikawa T."/>
            <person name="Otsuki T."/>
            <person name="Sugiyama T."/>
            <person name="Irie R."/>
            <person name="Wakamatsu A."/>
            <person name="Hayashi K."/>
            <person name="Sato H."/>
            <person name="Nagai K."/>
            <person name="Kimura K."/>
            <person name="Makita H."/>
            <person name="Sekine M."/>
            <person name="Obayashi M."/>
            <person name="Nishi T."/>
            <person name="Shibahara T."/>
            <person name="Tanaka T."/>
            <person name="Ishii S."/>
            <person name="Yamamoto J."/>
            <person name="Saito K."/>
            <person name="Kawai Y."/>
            <person name="Isono Y."/>
            <person name="Nakamura Y."/>
            <person name="Nagahari K."/>
            <person name="Murakami K."/>
            <person name="Yasuda T."/>
            <person name="Iwayanagi T."/>
            <person name="Wagatsuma M."/>
            <person name="Shiratori A."/>
            <person name="Sudo H."/>
            <person name="Hosoiri T."/>
            <person name="Kaku Y."/>
            <person name="Kodaira H."/>
            <person name="Kondo H."/>
            <person name="Sugawara M."/>
            <person name="Takahashi M."/>
            <person name="Kanda K."/>
            <person name="Yokoi T."/>
            <person name="Furuya T."/>
            <person name="Kikkawa E."/>
            <person name="Omura Y."/>
            <person name="Abe K."/>
            <person name="Kamihara K."/>
            <person name="Katsuta N."/>
            <person name="Sato K."/>
            <person name="Tanikawa M."/>
            <person name="Yamazaki M."/>
            <person name="Ninomiya K."/>
            <person name="Ishibashi T."/>
            <person name="Yamashita H."/>
            <person name="Murakawa K."/>
            <person name="Fujimori K."/>
            <person name="Tanai H."/>
            <person name="Kimata M."/>
            <person name="Watanabe M."/>
            <person name="Hiraoka S."/>
            <person name="Chiba Y."/>
            <person name="Ishida S."/>
            <person name="Ono Y."/>
            <person name="Takiguchi S."/>
            <person name="Watanabe S."/>
            <person name="Yosida M."/>
            <person name="Hotuta T."/>
            <person name="Kusano J."/>
            <person name="Kanehori K."/>
            <person name="Takahashi-Fujii A."/>
            <person name="Hara H."/>
            <person name="Tanase T.-O."/>
            <person name="Nomura Y."/>
            <person name="Togiya S."/>
            <person name="Komai F."/>
            <person name="Hara R."/>
            <person name="Takeuchi K."/>
            <person name="Arita M."/>
            <person name="Imose N."/>
            <person name="Musashino K."/>
            <person name="Yuuki H."/>
            <person name="Oshima A."/>
            <person name="Sasaki N."/>
            <person name="Aotsuka S."/>
            <person name="Yoshikawa Y."/>
            <person name="Matsunawa H."/>
            <person name="Ichihara T."/>
            <person name="Shiohata N."/>
            <person name="Sano S."/>
            <person name="Moriya S."/>
            <person name="Momiyama H."/>
            <person name="Satoh N."/>
            <person name="Takami S."/>
            <person name="Terashima Y."/>
            <person name="Suzuki O."/>
            <person name="Nakagawa S."/>
            <person name="Senoh A."/>
            <person name="Mizoguchi H."/>
            <person name="Goto Y."/>
            <person name="Shimizu F."/>
            <person name="Wakebe H."/>
            <person name="Hishigaki H."/>
            <person name="Watanabe T."/>
            <person name="Sugiyama A."/>
            <person name="Takemoto M."/>
            <person name="Kawakami B."/>
            <person name="Yamazaki M."/>
            <person name="Watanabe K."/>
            <person name="Kumagai A."/>
            <person name="Itakura S."/>
            <person name="Fukuzumi Y."/>
            <person name="Fujimori Y."/>
            <person name="Komiyama M."/>
            <person name="Tashiro H."/>
            <person name="Tanigami A."/>
            <person name="Fujiwara T."/>
            <person name="Ono T."/>
            <person name="Yamada K."/>
            <person name="Fujii Y."/>
            <person name="Ozaki K."/>
            <person name="Hirao M."/>
            <person name="Ohmori Y."/>
            <person name="Kawabata A."/>
            <person name="Hikiji T."/>
            <person name="Kobatake N."/>
            <person name="Inagaki H."/>
            <person name="Ikema Y."/>
            <person name="Okamoto S."/>
            <person name="Okitani R."/>
            <person name="Kawakami T."/>
            <person name="Noguchi S."/>
            <person name="Itoh T."/>
            <person name="Shigeta K."/>
            <person name="Senba T."/>
            <person name="Matsumura K."/>
            <person name="Nakajima Y."/>
            <person name="Mizuno T."/>
            <person name="Morinaga M."/>
            <person name="Sasaki M."/>
            <person name="Togashi T."/>
            <person name="Oyama M."/>
            <person name="Hata H."/>
            <person name="Watanabe M."/>
            <person name="Komatsu T."/>
            <person name="Mizushima-Sugano J."/>
            <person name="Satoh T."/>
            <person name="Shirai Y."/>
            <person name="Takahashi Y."/>
            <person name="Nakagawa K."/>
            <person name="Okumura K."/>
            <person name="Nagase T."/>
            <person name="Nomura N."/>
            <person name="Kikuchi H."/>
            <person name="Masuho Y."/>
            <person name="Yamashita R."/>
            <person name="Nakai K."/>
            <person name="Yada T."/>
            <person name="Nakamura Y."/>
            <person name="Ohara O."/>
            <person name="Isogai T."/>
            <person name="Sugano S."/>
        </authorList>
    </citation>
    <scope>NUCLEOTIDE SEQUENCE [LARGE SCALE MRNA]</scope>
    <source>
        <tissue>Testis</tissue>
    </source>
</reference>
<reference key="2">
    <citation type="journal article" date="2004" name="Genome Res.">
        <title>The status, quality, and expansion of the NIH full-length cDNA project: the Mammalian Gene Collection (MGC).</title>
        <authorList>
            <consortium name="The MGC Project Team"/>
        </authorList>
    </citation>
    <scope>NUCLEOTIDE SEQUENCE [LARGE SCALE MRNA]</scope>
    <source>
        <tissue>Brain</tissue>
    </source>
</reference>
<dbReference type="EMBL" id="AK098556">
    <property type="protein sequence ID" value="BAC05331.1"/>
    <property type="molecule type" value="mRNA"/>
</dbReference>
<dbReference type="EMBL" id="BC058929">
    <property type="protein sequence ID" value="AAH58929.1"/>
    <property type="molecule type" value="mRNA"/>
</dbReference>
<dbReference type="CCDS" id="CCDS820.1"/>
<dbReference type="RefSeq" id="NP_981957.1">
    <property type="nucleotide sequence ID" value="NM_203412.2"/>
</dbReference>
<dbReference type="SMR" id="Q8N7F7"/>
<dbReference type="BioGRID" id="127890">
    <property type="interactions" value="14"/>
</dbReference>
<dbReference type="FunCoup" id="Q8N7F7">
    <property type="interactions" value="2"/>
</dbReference>
<dbReference type="IntAct" id="Q8N7F7">
    <property type="interactions" value="16"/>
</dbReference>
<dbReference type="STRING" id="9606.ENSP00000334044"/>
<dbReference type="iPTMnet" id="Q8N7F7"/>
<dbReference type="BioMuta" id="UBL4B"/>
<dbReference type="DMDM" id="74729219"/>
<dbReference type="jPOST" id="Q8N7F7"/>
<dbReference type="MassIVE" id="Q8N7F7"/>
<dbReference type="PaxDb" id="9606-ENSP00000334044"/>
<dbReference type="PeptideAtlas" id="Q8N7F7"/>
<dbReference type="ProteomicsDB" id="72292"/>
<dbReference type="Antibodypedia" id="33782">
    <property type="antibodies" value="62 antibodies from 17 providers"/>
</dbReference>
<dbReference type="DNASU" id="164153"/>
<dbReference type="Ensembl" id="ENST00000334179.5">
    <property type="protein sequence ID" value="ENSP00000334044.3"/>
    <property type="gene ID" value="ENSG00000186150.5"/>
</dbReference>
<dbReference type="GeneID" id="164153"/>
<dbReference type="KEGG" id="hsa:164153"/>
<dbReference type="MANE-Select" id="ENST00000334179.5">
    <property type="protein sequence ID" value="ENSP00000334044.3"/>
    <property type="RefSeq nucleotide sequence ID" value="NM_203412.2"/>
    <property type="RefSeq protein sequence ID" value="NP_981957.1"/>
</dbReference>
<dbReference type="UCSC" id="uc001dzc.4">
    <property type="organism name" value="human"/>
</dbReference>
<dbReference type="AGR" id="HGNC:32309"/>
<dbReference type="CTD" id="164153"/>
<dbReference type="DisGeNET" id="164153"/>
<dbReference type="GeneCards" id="UBL4B"/>
<dbReference type="HGNC" id="HGNC:32309">
    <property type="gene designation" value="UBL4B"/>
</dbReference>
<dbReference type="HPA" id="ENSG00000186150">
    <property type="expression patterns" value="Tissue enriched (testis)"/>
</dbReference>
<dbReference type="MIM" id="611127">
    <property type="type" value="gene"/>
</dbReference>
<dbReference type="neXtProt" id="NX_Q8N7F7"/>
<dbReference type="OpenTargets" id="ENSG00000186150"/>
<dbReference type="PharmGKB" id="PA142670661"/>
<dbReference type="VEuPathDB" id="HostDB:ENSG00000186150"/>
<dbReference type="eggNOG" id="KOG0001">
    <property type="taxonomic scope" value="Eukaryota"/>
</dbReference>
<dbReference type="GeneTree" id="ENSGT00940000163477"/>
<dbReference type="HOGENOM" id="CLU_119809_0_0_1"/>
<dbReference type="InParanoid" id="Q8N7F7"/>
<dbReference type="OMA" id="ASINVIM"/>
<dbReference type="OrthoDB" id="417450at2759"/>
<dbReference type="PAN-GO" id="Q8N7F7">
    <property type="GO annotations" value="0 GO annotations based on evolutionary models"/>
</dbReference>
<dbReference type="PhylomeDB" id="Q8N7F7"/>
<dbReference type="TreeFam" id="TF354228"/>
<dbReference type="PathwayCommons" id="Q8N7F7"/>
<dbReference type="SignaLink" id="Q8N7F7"/>
<dbReference type="BioGRID-ORCS" id="164153">
    <property type="hits" value="16 hits in 1153 CRISPR screens"/>
</dbReference>
<dbReference type="ChiTaRS" id="UBL4B">
    <property type="organism name" value="human"/>
</dbReference>
<dbReference type="GenomeRNAi" id="164153"/>
<dbReference type="Pharos" id="Q8N7F7">
    <property type="development level" value="Tdark"/>
</dbReference>
<dbReference type="PRO" id="PR:Q8N7F7"/>
<dbReference type="Proteomes" id="UP000005640">
    <property type="component" value="Chromosome 1"/>
</dbReference>
<dbReference type="RNAct" id="Q8N7F7">
    <property type="molecule type" value="protein"/>
</dbReference>
<dbReference type="Bgee" id="ENSG00000186150">
    <property type="expression patterns" value="Expressed in left testis and 88 other cell types or tissues"/>
</dbReference>
<dbReference type="GO" id="GO:0005737">
    <property type="term" value="C:cytoplasm"/>
    <property type="evidence" value="ECO:0007669"/>
    <property type="project" value="UniProtKB-SubCell"/>
</dbReference>
<dbReference type="GO" id="GO:1903955">
    <property type="term" value="P:positive regulation of protein targeting to mitochondrion"/>
    <property type="evidence" value="ECO:0007001"/>
    <property type="project" value="ParkinsonsUK-UCL"/>
</dbReference>
<dbReference type="FunFam" id="3.10.20.90:FF:000383">
    <property type="entry name" value="Ubiquitin like 4B"/>
    <property type="match status" value="1"/>
</dbReference>
<dbReference type="Gene3D" id="3.10.20.90">
    <property type="entry name" value="Phosphatidylinositol 3-kinase Catalytic Subunit, Chain A, domain 1"/>
    <property type="match status" value="1"/>
</dbReference>
<dbReference type="InterPro" id="IPR000626">
    <property type="entry name" value="Ubiquitin-like_dom"/>
</dbReference>
<dbReference type="InterPro" id="IPR029071">
    <property type="entry name" value="Ubiquitin-like_domsf"/>
</dbReference>
<dbReference type="InterPro" id="IPR041421">
    <property type="entry name" value="Ubl4_C_TUGS"/>
</dbReference>
<dbReference type="InterPro" id="IPR043317">
    <property type="entry name" value="UBL4B"/>
</dbReference>
<dbReference type="PANTHER" id="PTHR47905">
    <property type="entry name" value="UBIQUITIN-LIKE PROTEIN 4B"/>
    <property type="match status" value="1"/>
</dbReference>
<dbReference type="PANTHER" id="PTHR47905:SF1">
    <property type="entry name" value="UBIQUITIN-LIKE PROTEIN 4B"/>
    <property type="match status" value="1"/>
</dbReference>
<dbReference type="Pfam" id="PF17840">
    <property type="entry name" value="Tugs"/>
    <property type="match status" value="1"/>
</dbReference>
<dbReference type="Pfam" id="PF00240">
    <property type="entry name" value="ubiquitin"/>
    <property type="match status" value="1"/>
</dbReference>
<dbReference type="SMART" id="SM00213">
    <property type="entry name" value="UBQ"/>
    <property type="match status" value="1"/>
</dbReference>
<dbReference type="SUPFAM" id="SSF54236">
    <property type="entry name" value="Ubiquitin-like"/>
    <property type="match status" value="1"/>
</dbReference>
<dbReference type="PROSITE" id="PS50053">
    <property type="entry name" value="UBIQUITIN_2"/>
    <property type="match status" value="1"/>
</dbReference>
<protein>
    <recommendedName>
        <fullName>Ubiquitin-like protein 4B</fullName>
    </recommendedName>
</protein>
<sequence>MFLTVKLLLGQRCSLKVSGQESVATLKRLVSRRLKVPEEQQHLLFRGQLLEDDKHLSDYCIGPNASINVIMQPLEKMALKEAHQPQTQPLWHQLGLVLAKHFEPQDAKAVLQLLRQEHEERLQKISLEHLEQLAQYLLAEEPHVEPAGERELEAKARPQSSCDMEEKEEAAADQ</sequence>
<keyword id="KW-0963">Cytoplasm</keyword>
<keyword id="KW-1267">Proteomics identification</keyword>
<keyword id="KW-1185">Reference proteome</keyword>
<feature type="chain" id="PRO_0000263701" description="Ubiquitin-like protein 4B">
    <location>
        <begin position="1"/>
        <end position="174"/>
    </location>
</feature>
<feature type="domain" description="Ubiquitin-like" evidence="2">
    <location>
        <begin position="1"/>
        <end position="76"/>
    </location>
</feature>
<feature type="region of interest" description="Disordered" evidence="3">
    <location>
        <begin position="141"/>
        <end position="174"/>
    </location>
</feature>
<feature type="compositionally biased region" description="Basic and acidic residues" evidence="3">
    <location>
        <begin position="141"/>
        <end position="156"/>
    </location>
</feature>
<feature type="compositionally biased region" description="Acidic residues" evidence="3">
    <location>
        <begin position="163"/>
        <end position="174"/>
    </location>
</feature>
<accession>Q8N7F7</accession>
<comment type="interaction">
    <interactant intactId="EBI-10267507">
        <id>Q8N7F7</id>
    </interactant>
    <interactant intactId="EBI-10988864">
        <id>P46379-2</id>
        <label>BAG6</label>
    </interactant>
    <organismsDiffer>false</organismsDiffer>
    <experiments>3</experiments>
</comment>
<comment type="interaction">
    <interactant intactId="EBI-10267507">
        <id>Q8N7F7</id>
    </interactant>
    <interactant intactId="EBI-5916454">
        <id>A6NEM1</id>
        <label>GOLGA6L9</label>
    </interactant>
    <organismsDiffer>false</organismsDiffer>
    <experiments>3</experiments>
</comment>
<comment type="interaction">
    <interactant intactId="EBI-10267507">
        <id>Q8N7F7</id>
    </interactant>
    <interactant intactId="EBI-465156">
        <id>Q9UBH0</id>
        <label>IL36RN</label>
    </interactant>
    <organismsDiffer>false</organismsDiffer>
    <experiments>3</experiments>
</comment>
<comment type="interaction">
    <interactant intactId="EBI-10267507">
        <id>Q8N7F7</id>
    </interactant>
    <interactant intactId="EBI-748397">
        <id>P50222</id>
        <label>MEOX2</label>
    </interactant>
    <organismsDiffer>false</organismsDiffer>
    <experiments>3</experiments>
</comment>
<comment type="interaction">
    <interactant intactId="EBI-10267507">
        <id>Q8N7F7</id>
    </interactant>
    <interactant intactId="EBI-3650647">
        <id>Q9BUZ4</id>
        <label>TRAF4</label>
    </interactant>
    <organismsDiffer>false</organismsDiffer>
    <experiments>7</experiments>
</comment>
<comment type="subcellular location">
    <subcellularLocation>
        <location evidence="1">Cytoplasm</location>
    </subcellularLocation>
</comment>
<comment type="miscellaneous">
    <text>May have arisen from retrotransposition of the X-linked UBL4A gene during mammalian evolution.</text>
</comment>
<evidence type="ECO:0000250" key="1"/>
<evidence type="ECO:0000255" key="2">
    <source>
        <dbReference type="PROSITE-ProRule" id="PRU00214"/>
    </source>
</evidence>
<evidence type="ECO:0000256" key="3">
    <source>
        <dbReference type="SAM" id="MobiDB-lite"/>
    </source>
</evidence>
<organism>
    <name type="scientific">Homo sapiens</name>
    <name type="common">Human</name>
    <dbReference type="NCBI Taxonomy" id="9606"/>
    <lineage>
        <taxon>Eukaryota</taxon>
        <taxon>Metazoa</taxon>
        <taxon>Chordata</taxon>
        <taxon>Craniata</taxon>
        <taxon>Vertebrata</taxon>
        <taxon>Euteleostomi</taxon>
        <taxon>Mammalia</taxon>
        <taxon>Eutheria</taxon>
        <taxon>Euarchontoglires</taxon>
        <taxon>Primates</taxon>
        <taxon>Haplorrhini</taxon>
        <taxon>Catarrhini</taxon>
        <taxon>Hominidae</taxon>
        <taxon>Homo</taxon>
    </lineage>
</organism>
<name>UBL4B_HUMAN</name>
<gene>
    <name type="primary">UBL4B</name>
</gene>